<dbReference type="EMBL" id="AL591688">
    <property type="protein sequence ID" value="CAC45950.1"/>
    <property type="molecule type" value="Genomic_DNA"/>
</dbReference>
<dbReference type="RefSeq" id="NP_385477.1">
    <property type="nucleotide sequence ID" value="NC_003047.1"/>
</dbReference>
<dbReference type="RefSeq" id="WP_003536514.1">
    <property type="nucleotide sequence ID" value="NC_003047.1"/>
</dbReference>
<dbReference type="SMR" id="Q92QF5"/>
<dbReference type="EnsemblBacteria" id="CAC45950">
    <property type="protein sequence ID" value="CAC45950"/>
    <property type="gene ID" value="SMc01294"/>
</dbReference>
<dbReference type="GeneID" id="89575695"/>
<dbReference type="KEGG" id="sme:SMc01294"/>
<dbReference type="PATRIC" id="fig|266834.11.peg.2787"/>
<dbReference type="eggNOG" id="COG0097">
    <property type="taxonomic scope" value="Bacteria"/>
</dbReference>
<dbReference type="HOGENOM" id="CLU_065464_1_2_5"/>
<dbReference type="OrthoDB" id="9805007at2"/>
<dbReference type="Proteomes" id="UP000001976">
    <property type="component" value="Chromosome"/>
</dbReference>
<dbReference type="GO" id="GO:0022625">
    <property type="term" value="C:cytosolic large ribosomal subunit"/>
    <property type="evidence" value="ECO:0007669"/>
    <property type="project" value="TreeGrafter"/>
</dbReference>
<dbReference type="GO" id="GO:0019843">
    <property type="term" value="F:rRNA binding"/>
    <property type="evidence" value="ECO:0007669"/>
    <property type="project" value="UniProtKB-UniRule"/>
</dbReference>
<dbReference type="GO" id="GO:0003735">
    <property type="term" value="F:structural constituent of ribosome"/>
    <property type="evidence" value="ECO:0007669"/>
    <property type="project" value="InterPro"/>
</dbReference>
<dbReference type="GO" id="GO:0002181">
    <property type="term" value="P:cytoplasmic translation"/>
    <property type="evidence" value="ECO:0007669"/>
    <property type="project" value="TreeGrafter"/>
</dbReference>
<dbReference type="FunFam" id="3.90.930.12:FF:000001">
    <property type="entry name" value="50S ribosomal protein L6"/>
    <property type="match status" value="1"/>
</dbReference>
<dbReference type="FunFam" id="3.90.930.12:FF:000002">
    <property type="entry name" value="50S ribosomal protein L6"/>
    <property type="match status" value="1"/>
</dbReference>
<dbReference type="Gene3D" id="3.90.930.12">
    <property type="entry name" value="Ribosomal protein L6, alpha-beta domain"/>
    <property type="match status" value="2"/>
</dbReference>
<dbReference type="HAMAP" id="MF_01365_B">
    <property type="entry name" value="Ribosomal_uL6_B"/>
    <property type="match status" value="1"/>
</dbReference>
<dbReference type="InterPro" id="IPR000702">
    <property type="entry name" value="Ribosomal_uL6-like"/>
</dbReference>
<dbReference type="InterPro" id="IPR036789">
    <property type="entry name" value="Ribosomal_uL6-like_a/b-dom_sf"/>
</dbReference>
<dbReference type="InterPro" id="IPR020040">
    <property type="entry name" value="Ribosomal_uL6_a/b-dom"/>
</dbReference>
<dbReference type="InterPro" id="IPR019906">
    <property type="entry name" value="Ribosomal_uL6_bac-type"/>
</dbReference>
<dbReference type="InterPro" id="IPR002358">
    <property type="entry name" value="Ribosomal_uL6_CS"/>
</dbReference>
<dbReference type="NCBIfam" id="TIGR03654">
    <property type="entry name" value="L6_bact"/>
    <property type="match status" value="1"/>
</dbReference>
<dbReference type="PANTHER" id="PTHR11655">
    <property type="entry name" value="60S/50S RIBOSOMAL PROTEIN L6/L9"/>
    <property type="match status" value="1"/>
</dbReference>
<dbReference type="PANTHER" id="PTHR11655:SF14">
    <property type="entry name" value="LARGE RIBOSOMAL SUBUNIT PROTEIN UL6M"/>
    <property type="match status" value="1"/>
</dbReference>
<dbReference type="Pfam" id="PF00347">
    <property type="entry name" value="Ribosomal_L6"/>
    <property type="match status" value="2"/>
</dbReference>
<dbReference type="PIRSF" id="PIRSF002162">
    <property type="entry name" value="Ribosomal_L6"/>
    <property type="match status" value="1"/>
</dbReference>
<dbReference type="PRINTS" id="PR00059">
    <property type="entry name" value="RIBOSOMALL6"/>
</dbReference>
<dbReference type="SUPFAM" id="SSF56053">
    <property type="entry name" value="Ribosomal protein L6"/>
    <property type="match status" value="2"/>
</dbReference>
<dbReference type="PROSITE" id="PS00525">
    <property type="entry name" value="RIBOSOMAL_L6_1"/>
    <property type="match status" value="1"/>
</dbReference>
<protein>
    <recommendedName>
        <fullName evidence="1">Large ribosomal subunit protein uL6</fullName>
    </recommendedName>
    <alternativeName>
        <fullName evidence="2">50S ribosomal protein L6</fullName>
    </alternativeName>
</protein>
<gene>
    <name evidence="1" type="primary">rplF</name>
    <name type="ordered locus">R01371</name>
    <name type="ORF">SMc01294</name>
</gene>
<comment type="function">
    <text evidence="1">This protein binds to the 23S rRNA, and is important in its secondary structure. It is located near the subunit interface in the base of the L7/L12 stalk, and near the tRNA binding site of the peptidyltransferase center.</text>
</comment>
<comment type="subunit">
    <text evidence="1">Part of the 50S ribosomal subunit.</text>
</comment>
<comment type="similarity">
    <text evidence="1">Belongs to the universal ribosomal protein uL6 family.</text>
</comment>
<proteinExistence type="inferred from homology"/>
<accession>Q92QF5</accession>
<feature type="chain" id="PRO_0000260926" description="Large ribosomal subunit protein uL6">
    <location>
        <begin position="1"/>
        <end position="177"/>
    </location>
</feature>
<name>RL6_RHIME</name>
<evidence type="ECO:0000255" key="1">
    <source>
        <dbReference type="HAMAP-Rule" id="MF_01365"/>
    </source>
</evidence>
<evidence type="ECO:0000305" key="2"/>
<sequence length="177" mass="19422">MSRIGKKPVQVPAGVTANVDGQKVTAKGPKGELFFVANDEVSVKLENNTVVVQPLNESKDARAKWGMSRTMIENILKGVKDGYERKLEINGVGYRASMQGKNLQLALGFSHDVVYQTPEGITIAVPKPTEIVVSGINKQQVGQVAAEIREYRGPEPYKGKGVKYAEERIVRKEGKKK</sequence>
<keyword id="KW-1185">Reference proteome</keyword>
<keyword id="KW-0687">Ribonucleoprotein</keyword>
<keyword id="KW-0689">Ribosomal protein</keyword>
<keyword id="KW-0694">RNA-binding</keyword>
<keyword id="KW-0699">rRNA-binding</keyword>
<reference key="1">
    <citation type="journal article" date="2001" name="Proc. Natl. Acad. Sci. U.S.A.">
        <title>Analysis of the chromosome sequence of the legume symbiont Sinorhizobium meliloti strain 1021.</title>
        <authorList>
            <person name="Capela D."/>
            <person name="Barloy-Hubler F."/>
            <person name="Gouzy J."/>
            <person name="Bothe G."/>
            <person name="Ampe F."/>
            <person name="Batut J."/>
            <person name="Boistard P."/>
            <person name="Becker A."/>
            <person name="Boutry M."/>
            <person name="Cadieu E."/>
            <person name="Dreano S."/>
            <person name="Gloux S."/>
            <person name="Godrie T."/>
            <person name="Goffeau A."/>
            <person name="Kahn D."/>
            <person name="Kiss E."/>
            <person name="Lelaure V."/>
            <person name="Masuy D."/>
            <person name="Pohl T."/>
            <person name="Portetelle D."/>
            <person name="Puehler A."/>
            <person name="Purnelle B."/>
            <person name="Ramsperger U."/>
            <person name="Renard C."/>
            <person name="Thebault P."/>
            <person name="Vandenbol M."/>
            <person name="Weidner S."/>
            <person name="Galibert F."/>
        </authorList>
    </citation>
    <scope>NUCLEOTIDE SEQUENCE [LARGE SCALE GENOMIC DNA]</scope>
    <source>
        <strain>1021</strain>
    </source>
</reference>
<reference key="2">
    <citation type="journal article" date="2001" name="Science">
        <title>The composite genome of the legume symbiont Sinorhizobium meliloti.</title>
        <authorList>
            <person name="Galibert F."/>
            <person name="Finan T.M."/>
            <person name="Long S.R."/>
            <person name="Puehler A."/>
            <person name="Abola P."/>
            <person name="Ampe F."/>
            <person name="Barloy-Hubler F."/>
            <person name="Barnett M.J."/>
            <person name="Becker A."/>
            <person name="Boistard P."/>
            <person name="Bothe G."/>
            <person name="Boutry M."/>
            <person name="Bowser L."/>
            <person name="Buhrmester J."/>
            <person name="Cadieu E."/>
            <person name="Capela D."/>
            <person name="Chain P."/>
            <person name="Cowie A."/>
            <person name="Davis R.W."/>
            <person name="Dreano S."/>
            <person name="Federspiel N.A."/>
            <person name="Fisher R.F."/>
            <person name="Gloux S."/>
            <person name="Godrie T."/>
            <person name="Goffeau A."/>
            <person name="Golding B."/>
            <person name="Gouzy J."/>
            <person name="Gurjal M."/>
            <person name="Hernandez-Lucas I."/>
            <person name="Hong A."/>
            <person name="Huizar L."/>
            <person name="Hyman R.W."/>
            <person name="Jones T."/>
            <person name="Kahn D."/>
            <person name="Kahn M.L."/>
            <person name="Kalman S."/>
            <person name="Keating D.H."/>
            <person name="Kiss E."/>
            <person name="Komp C."/>
            <person name="Lelaure V."/>
            <person name="Masuy D."/>
            <person name="Palm C."/>
            <person name="Peck M.C."/>
            <person name="Pohl T.M."/>
            <person name="Portetelle D."/>
            <person name="Purnelle B."/>
            <person name="Ramsperger U."/>
            <person name="Surzycki R."/>
            <person name="Thebault P."/>
            <person name="Vandenbol M."/>
            <person name="Vorhoelter F.J."/>
            <person name="Weidner S."/>
            <person name="Wells D.H."/>
            <person name="Wong K."/>
            <person name="Yeh K.-C."/>
            <person name="Batut J."/>
        </authorList>
    </citation>
    <scope>NUCLEOTIDE SEQUENCE [LARGE SCALE GENOMIC DNA]</scope>
    <source>
        <strain>1021</strain>
    </source>
</reference>
<organism>
    <name type="scientific">Rhizobium meliloti (strain 1021)</name>
    <name type="common">Ensifer meliloti</name>
    <name type="synonym">Sinorhizobium meliloti</name>
    <dbReference type="NCBI Taxonomy" id="266834"/>
    <lineage>
        <taxon>Bacteria</taxon>
        <taxon>Pseudomonadati</taxon>
        <taxon>Pseudomonadota</taxon>
        <taxon>Alphaproteobacteria</taxon>
        <taxon>Hyphomicrobiales</taxon>
        <taxon>Rhizobiaceae</taxon>
        <taxon>Sinorhizobium/Ensifer group</taxon>
        <taxon>Sinorhizobium</taxon>
    </lineage>
</organism>